<dbReference type="EMBL" id="AC005287">
    <property type="protein sequence ID" value="AAD25634.1"/>
    <property type="status" value="ALT_SEQ"/>
    <property type="molecule type" value="Genomic_DNA"/>
</dbReference>
<dbReference type="EMBL" id="CP002684">
    <property type="protein sequence ID" value="AEE33091.1"/>
    <property type="molecule type" value="Genomic_DNA"/>
</dbReference>
<dbReference type="EMBL" id="CP002684">
    <property type="protein sequence ID" value="AEE33092.1"/>
    <property type="molecule type" value="Genomic_DNA"/>
</dbReference>
<dbReference type="EMBL" id="CP002684">
    <property type="protein sequence ID" value="ANM59946.1"/>
    <property type="molecule type" value="Genomic_DNA"/>
</dbReference>
<dbReference type="EMBL" id="AY735540">
    <property type="protein sequence ID" value="AAU44410.1"/>
    <property type="molecule type" value="mRNA"/>
</dbReference>
<dbReference type="EMBL" id="AY735541">
    <property type="protein sequence ID" value="AAU44411.1"/>
    <property type="molecule type" value="mRNA"/>
</dbReference>
<dbReference type="EMBL" id="DQ459171">
    <property type="protein sequence ID" value="ABE97170.1"/>
    <property type="molecule type" value="mRNA"/>
</dbReference>
<dbReference type="PIR" id="F96585">
    <property type="entry name" value="F96585"/>
</dbReference>
<dbReference type="RefSeq" id="NP_001031189.1">
    <property type="nucleotide sequence ID" value="NM_001036112.3"/>
</dbReference>
<dbReference type="RefSeq" id="NP_001322263.1">
    <property type="nucleotide sequence ID" value="NM_001333644.1"/>
</dbReference>
<dbReference type="RefSeq" id="NP_683432.1">
    <property type="nucleotide sequence ID" value="NM_148591.3"/>
</dbReference>
<dbReference type="SMR" id="Q5XVI1"/>
<dbReference type="FunCoup" id="Q5XVI1">
    <property type="interactions" value="563"/>
</dbReference>
<dbReference type="STRING" id="3702.Q5XVI1"/>
<dbReference type="iPTMnet" id="Q5XVI1"/>
<dbReference type="PaxDb" id="3702-AT1G54385.2"/>
<dbReference type="ProteomicsDB" id="234470"/>
<dbReference type="EnsemblPlants" id="AT1G54385.1">
    <property type="protein sequence ID" value="AT1G54385.1"/>
    <property type="gene ID" value="AT1G54385"/>
</dbReference>
<dbReference type="EnsemblPlants" id="AT1G54385.2">
    <property type="protein sequence ID" value="AT1G54385.2"/>
    <property type="gene ID" value="AT1G54385"/>
</dbReference>
<dbReference type="EnsemblPlants" id="AT1G54385.3">
    <property type="protein sequence ID" value="AT1G54385.3"/>
    <property type="gene ID" value="AT1G54385"/>
</dbReference>
<dbReference type="GeneID" id="841880"/>
<dbReference type="Gramene" id="AT1G54385.1">
    <property type="protein sequence ID" value="AT1G54385.1"/>
    <property type="gene ID" value="AT1G54385"/>
</dbReference>
<dbReference type="Gramene" id="AT1G54385.2">
    <property type="protein sequence ID" value="AT1G54385.2"/>
    <property type="gene ID" value="AT1G54385"/>
</dbReference>
<dbReference type="Gramene" id="AT1G54385.3">
    <property type="protein sequence ID" value="AT1G54385.3"/>
    <property type="gene ID" value="AT1G54385"/>
</dbReference>
<dbReference type="KEGG" id="ath:AT1G54385"/>
<dbReference type="Araport" id="AT1G54385"/>
<dbReference type="TAIR" id="AT1G54385">
    <property type="gene designation" value="SINE1"/>
</dbReference>
<dbReference type="eggNOG" id="ENOG502QQPA">
    <property type="taxonomic scope" value="Eukaryota"/>
</dbReference>
<dbReference type="HOGENOM" id="CLU_028938_0_0_1"/>
<dbReference type="InParanoid" id="Q5XVI1"/>
<dbReference type="OMA" id="DMVNEVC"/>
<dbReference type="OrthoDB" id="611190at2759"/>
<dbReference type="PhylomeDB" id="Q5XVI1"/>
<dbReference type="PRO" id="PR:Q5XVI1"/>
<dbReference type="Proteomes" id="UP000006548">
    <property type="component" value="Chromosome 1"/>
</dbReference>
<dbReference type="ExpressionAtlas" id="Q5XVI1">
    <property type="expression patterns" value="baseline and differential"/>
</dbReference>
<dbReference type="GO" id="GO:0005874">
    <property type="term" value="C:microtubule"/>
    <property type="evidence" value="ECO:0007669"/>
    <property type="project" value="InterPro"/>
</dbReference>
<dbReference type="GO" id="GO:0005635">
    <property type="term" value="C:nuclear envelope"/>
    <property type="evidence" value="ECO:0000314"/>
    <property type="project" value="TAIR"/>
</dbReference>
<dbReference type="GO" id="GO:0031965">
    <property type="term" value="C:nuclear membrane"/>
    <property type="evidence" value="ECO:0007669"/>
    <property type="project" value="UniProtKB-SubCell"/>
</dbReference>
<dbReference type="GO" id="GO:0003779">
    <property type="term" value="F:actin binding"/>
    <property type="evidence" value="ECO:0000314"/>
    <property type="project" value="TAIR"/>
</dbReference>
<dbReference type="GO" id="GO:0008017">
    <property type="term" value="F:microtubule binding"/>
    <property type="evidence" value="ECO:0007669"/>
    <property type="project" value="InterPro"/>
</dbReference>
<dbReference type="GO" id="GO:0007097">
    <property type="term" value="P:nuclear migration"/>
    <property type="evidence" value="ECO:0000315"/>
    <property type="project" value="TAIR"/>
</dbReference>
<dbReference type="Gene3D" id="1.25.10.10">
    <property type="entry name" value="Leucine-rich Repeat Variant"/>
    <property type="match status" value="1"/>
</dbReference>
<dbReference type="InterPro" id="IPR011989">
    <property type="entry name" value="ARM-like"/>
</dbReference>
<dbReference type="InterPro" id="IPR016024">
    <property type="entry name" value="ARM-type_fold"/>
</dbReference>
<dbReference type="InterPro" id="IPR033337">
    <property type="entry name" value="TORTIFOLIA1/SINE1-2"/>
</dbReference>
<dbReference type="PANTHER" id="PTHR31355">
    <property type="entry name" value="MICROTUBULE-ASSOCIATED PROTEIN TORTIFOLIA1"/>
    <property type="match status" value="1"/>
</dbReference>
<dbReference type="PANTHER" id="PTHR31355:SF4">
    <property type="entry name" value="TOG DOMAIN-CONTAINING PROTEIN"/>
    <property type="match status" value="1"/>
</dbReference>
<dbReference type="Pfam" id="PF24714">
    <property type="entry name" value="TOR1L1_N"/>
    <property type="match status" value="1"/>
</dbReference>
<dbReference type="SUPFAM" id="SSF48371">
    <property type="entry name" value="ARM repeat"/>
    <property type="match status" value="1"/>
</dbReference>
<sequence length="560" mass="62153">MGLNLNPILRQELANLDKDTESRKSAMKALKSYVKDLDSKAIPGFLAQVFETKETNSLSGEYTISLYEILARVHGPNIVPQIDTIMSTIVKTLASSAGSFPLQQACSKVIPAIARYGIDPTTTEDKKRVIIHSLCKPLTDSLLASQESLTSGAALCLKALVDSDNWRFASDEMVNRVCQNVVVALDSNSNQTHLQMGLVMSLAKHNPLIVEAYARLLIHTGLRILGFGVSEGNSQKRLSAVQMLNFLMKCLDPRSIYSEVELIIKEMERCQSDQMAYVRGAAYEAMMTSKRIAAELESKMEKGCRSVTGSNFSRRNCSSIVPDYSLSPESQTLGSFSGYDSPVESSPISHTSCNSEFDRRSVNRKLWRRDENGGVVDISLKDGLFSRVTKGSTTVSDSPLVPYDTCENGDEFEGFLMESLRNTTPSPQRQRSRRINAEDFNIFSTPRKLISSLQYPDDVDLDHSDIQSPILRGEREKTIGSRKNPKLRKQFPTMVETMSSTITVSEDTAQTQMITGKKKKKKMSYAKLVIAISFVVVALFATVILMVNQDDDVGYYTVPT</sequence>
<accession>Q5XVI1</accession>
<accession>Q1KS90</accession>
<accession>Q9SLJ5</accession>
<protein>
    <recommendedName>
        <fullName evidence="3">Protein SINE1</fullName>
    </recommendedName>
</protein>
<keyword id="KW-0007">Acetylation</keyword>
<keyword id="KW-0472">Membrane</keyword>
<keyword id="KW-0539">Nucleus</keyword>
<keyword id="KW-1185">Reference proteome</keyword>
<keyword id="KW-0812">Transmembrane</keyword>
<keyword id="KW-1133">Transmembrane helix</keyword>
<feature type="initiator methionine" description="Removed" evidence="8">
    <location>
        <position position="1"/>
    </location>
</feature>
<feature type="chain" id="PRO_0000441681" description="Protein SINE1">
    <location>
        <begin position="2"/>
        <end position="560"/>
    </location>
</feature>
<feature type="transmembrane region" description="Helical" evidence="1">
    <location>
        <begin position="528"/>
        <end position="548"/>
    </location>
</feature>
<feature type="domain" description="KASH" evidence="5">
    <location>
        <begin position="517"/>
        <end position="560"/>
    </location>
</feature>
<feature type="region of interest" description="ARMADILLO-type fold" evidence="1">
    <location>
        <begin position="7"/>
        <end position="287"/>
    </location>
</feature>
<feature type="short sequence motif" description="Required for nuclear localization" evidence="2">
    <location>
        <begin position="557"/>
        <end position="560"/>
    </location>
</feature>
<feature type="modified residue" description="N-acetylglycine" evidence="8">
    <location>
        <position position="2"/>
    </location>
</feature>
<feature type="sequence conflict" description="In Ref. 4; ABE97170." evidence="4" ref="4">
    <original>W</original>
    <variation>C</variation>
    <location>
        <position position="166"/>
    </location>
</feature>
<name>SINE1_ARATH</name>
<comment type="function">
    <text evidence="2">Plays a role in nucleus positioning in guard cells.</text>
</comment>
<comment type="subunit">
    <text evidence="2">Interacts with SUN1 and SUN2. Binds to F-actin.</text>
</comment>
<comment type="subcellular location">
    <subcellularLocation>
        <location evidence="2">Nucleus membrane</location>
        <topology evidence="1">Single-pass membrane protein</topology>
    </subcellularLocation>
</comment>
<comment type="tissue specificity">
    <text evidence="2">Preferentially expressed in guards cells, but also detected in root cells.</text>
</comment>
<comment type="domain">
    <text evidence="5">The KASH domain, which contains a transmembrane domain, mediates the nuclear envelope targeting and is involved in the binding to the SUN proteins.</text>
</comment>
<comment type="disruption phenotype">
    <text evidence="2">No visible phenotype. Affected nucleus positioning in guard cells.</text>
</comment>
<comment type="sequence caution" evidence="4">
    <conflict type="erroneous gene model prediction">
        <sequence resource="EMBL-CDS" id="AAD25634"/>
    </conflict>
</comment>
<gene>
    <name evidence="3" type="primary">SINE1</name>
    <name evidence="6" type="ordered locus">At1g54385</name>
    <name evidence="7" type="ORF">F20D21.21</name>
</gene>
<proteinExistence type="evidence at protein level"/>
<reference key="1">
    <citation type="journal article" date="2000" name="Nature">
        <title>Sequence and analysis of chromosome 1 of the plant Arabidopsis thaliana.</title>
        <authorList>
            <person name="Theologis A."/>
            <person name="Ecker J.R."/>
            <person name="Palm C.J."/>
            <person name="Federspiel N.A."/>
            <person name="Kaul S."/>
            <person name="White O."/>
            <person name="Alonso J."/>
            <person name="Altafi H."/>
            <person name="Araujo R."/>
            <person name="Bowman C.L."/>
            <person name="Brooks S.Y."/>
            <person name="Buehler E."/>
            <person name="Chan A."/>
            <person name="Chao Q."/>
            <person name="Chen H."/>
            <person name="Cheuk R.F."/>
            <person name="Chin C.W."/>
            <person name="Chung M.K."/>
            <person name="Conn L."/>
            <person name="Conway A.B."/>
            <person name="Conway A.R."/>
            <person name="Creasy T.H."/>
            <person name="Dewar K."/>
            <person name="Dunn P."/>
            <person name="Etgu P."/>
            <person name="Feldblyum T.V."/>
            <person name="Feng J.-D."/>
            <person name="Fong B."/>
            <person name="Fujii C.Y."/>
            <person name="Gill J.E."/>
            <person name="Goldsmith A.D."/>
            <person name="Haas B."/>
            <person name="Hansen N.F."/>
            <person name="Hughes B."/>
            <person name="Huizar L."/>
            <person name="Hunter J.L."/>
            <person name="Jenkins J."/>
            <person name="Johnson-Hopson C."/>
            <person name="Khan S."/>
            <person name="Khaykin E."/>
            <person name="Kim C.J."/>
            <person name="Koo H.L."/>
            <person name="Kremenetskaia I."/>
            <person name="Kurtz D.B."/>
            <person name="Kwan A."/>
            <person name="Lam B."/>
            <person name="Langin-Hooper S."/>
            <person name="Lee A."/>
            <person name="Lee J.M."/>
            <person name="Lenz C.A."/>
            <person name="Li J.H."/>
            <person name="Li Y.-P."/>
            <person name="Lin X."/>
            <person name="Liu S.X."/>
            <person name="Liu Z.A."/>
            <person name="Luros J.S."/>
            <person name="Maiti R."/>
            <person name="Marziali A."/>
            <person name="Militscher J."/>
            <person name="Miranda M."/>
            <person name="Nguyen M."/>
            <person name="Nierman W.C."/>
            <person name="Osborne B.I."/>
            <person name="Pai G."/>
            <person name="Peterson J."/>
            <person name="Pham P.K."/>
            <person name="Rizzo M."/>
            <person name="Rooney T."/>
            <person name="Rowley D."/>
            <person name="Sakano H."/>
            <person name="Salzberg S.L."/>
            <person name="Schwartz J.R."/>
            <person name="Shinn P."/>
            <person name="Southwick A.M."/>
            <person name="Sun H."/>
            <person name="Tallon L.J."/>
            <person name="Tambunga G."/>
            <person name="Toriumi M.J."/>
            <person name="Town C.D."/>
            <person name="Utterback T."/>
            <person name="Van Aken S."/>
            <person name="Vaysberg M."/>
            <person name="Vysotskaia V.S."/>
            <person name="Walker M."/>
            <person name="Wu D."/>
            <person name="Yu G."/>
            <person name="Fraser C.M."/>
            <person name="Venter J.C."/>
            <person name="Davis R.W."/>
        </authorList>
    </citation>
    <scope>NUCLEOTIDE SEQUENCE [LARGE SCALE GENOMIC DNA]</scope>
    <source>
        <strain>cv. Columbia</strain>
    </source>
</reference>
<reference key="2">
    <citation type="journal article" date="2017" name="Plant J.">
        <title>Araport11: a complete reannotation of the Arabidopsis thaliana reference genome.</title>
        <authorList>
            <person name="Cheng C.Y."/>
            <person name="Krishnakumar V."/>
            <person name="Chan A.P."/>
            <person name="Thibaud-Nissen F."/>
            <person name="Schobel S."/>
            <person name="Town C.D."/>
        </authorList>
    </citation>
    <scope>GENOME REANNOTATION</scope>
    <source>
        <strain>cv. Columbia</strain>
    </source>
</reference>
<reference key="3">
    <citation type="submission" date="2004-08" db="EMBL/GenBank/DDBJ databases">
        <title>Reconstruction of cDNA sequences for hypothetical genes in Arabidopsis thaliana from 5' and 3' RACE products.</title>
        <authorList>
            <person name="Xiao Y.-L."/>
            <person name="Underwood B.A."/>
            <person name="Moskal W.A. Jr."/>
            <person name="Wang W."/>
            <person name="Redman J.C."/>
            <person name="Wu H.C."/>
            <person name="Utterback T."/>
            <person name="Town C.D."/>
        </authorList>
    </citation>
    <scope>NUCLEOTIDE SEQUENCE [LARGE SCALE MRNA]</scope>
    <source>
        <strain>cv. Columbia</strain>
    </source>
</reference>
<reference key="4">
    <citation type="journal article" date="2006" name="Plant Biotechnol. J.">
        <title>Simultaneous high-throughput recombinational cloning of open reading frames in closed and open configurations.</title>
        <authorList>
            <person name="Underwood B.A."/>
            <person name="Vanderhaeghen R."/>
            <person name="Whitford R."/>
            <person name="Town C.D."/>
            <person name="Hilson P."/>
        </authorList>
    </citation>
    <scope>NUCLEOTIDE SEQUENCE [LARGE SCALE MRNA]</scope>
    <source>
        <strain>cv. Columbia</strain>
    </source>
</reference>
<reference key="5">
    <citation type="journal article" date="2012" name="Mol. Cell. Proteomics">
        <title>Comparative large-scale characterisation of plant vs. mammal proteins reveals similar and idiosyncratic N-alpha acetylation features.</title>
        <authorList>
            <person name="Bienvenut W.V."/>
            <person name="Sumpton D."/>
            <person name="Martinez A."/>
            <person name="Lilla S."/>
            <person name="Espagne C."/>
            <person name="Meinnel T."/>
            <person name="Giglione C."/>
        </authorList>
    </citation>
    <scope>ACETYLATION [LARGE SCALE ANALYSIS] AT GLY-2</scope>
    <scope>CLEAVAGE OF INITIATOR METHIONINE [LARGE SCALE ANALYSIS]</scope>
    <scope>IDENTIFICATION BY MASS SPECTROMETRY [LARGE SCALE ANALYSIS]</scope>
</reference>
<reference key="6">
    <citation type="journal article" date="2014" name="J. Cell Biol.">
        <title>Identification of unique SUN-interacting nuclear envelope proteins with diverse functions in plants.</title>
        <authorList>
            <person name="Zhou X."/>
            <person name="Graumann K."/>
            <person name="Wirthmueller L."/>
            <person name="Jones J.D."/>
            <person name="Meier I."/>
        </authorList>
    </citation>
    <scope>GENE FAMILY</scope>
    <scope>NOMENCLATURE</scope>
    <scope>SUBCELLULAR LOCATION</scope>
    <scope>INTERACTION WITH SINE1 AND SINE2</scope>
    <scope>TISSUE SPECIFICITY</scope>
    <scope>DISRUPTION PHENOTYPE</scope>
    <scope>FUNCTION</scope>
</reference>
<reference key="7">
    <citation type="journal article" date="2015" name="J. Exp. Bot.">
        <title>The plant nuclear envelope as a multifunctional platform LINCed by SUN and KASH.</title>
        <authorList>
            <person name="Zhou X."/>
            <person name="Graumann K."/>
            <person name="Meier I."/>
        </authorList>
    </citation>
    <scope>REVIEW</scope>
</reference>
<evidence type="ECO:0000255" key="1"/>
<evidence type="ECO:0000269" key="2">
    <source>
    </source>
</evidence>
<evidence type="ECO:0000303" key="3">
    <source>
    </source>
</evidence>
<evidence type="ECO:0000305" key="4"/>
<evidence type="ECO:0000305" key="5">
    <source>
    </source>
</evidence>
<evidence type="ECO:0000312" key="6">
    <source>
        <dbReference type="Araport" id="AT1G54385"/>
    </source>
</evidence>
<evidence type="ECO:0000312" key="7">
    <source>
        <dbReference type="EMBL" id="AAD25634.1"/>
    </source>
</evidence>
<evidence type="ECO:0007744" key="8">
    <source>
    </source>
</evidence>
<organism>
    <name type="scientific">Arabidopsis thaliana</name>
    <name type="common">Mouse-ear cress</name>
    <dbReference type="NCBI Taxonomy" id="3702"/>
    <lineage>
        <taxon>Eukaryota</taxon>
        <taxon>Viridiplantae</taxon>
        <taxon>Streptophyta</taxon>
        <taxon>Embryophyta</taxon>
        <taxon>Tracheophyta</taxon>
        <taxon>Spermatophyta</taxon>
        <taxon>Magnoliopsida</taxon>
        <taxon>eudicotyledons</taxon>
        <taxon>Gunneridae</taxon>
        <taxon>Pentapetalae</taxon>
        <taxon>rosids</taxon>
        <taxon>malvids</taxon>
        <taxon>Brassicales</taxon>
        <taxon>Brassicaceae</taxon>
        <taxon>Camelineae</taxon>
        <taxon>Arabidopsis</taxon>
    </lineage>
</organism>